<organism>
    <name type="scientific">Homo sapiens</name>
    <name type="common">Human</name>
    <dbReference type="NCBI Taxonomy" id="9606"/>
    <lineage>
        <taxon>Eukaryota</taxon>
        <taxon>Metazoa</taxon>
        <taxon>Chordata</taxon>
        <taxon>Craniata</taxon>
        <taxon>Vertebrata</taxon>
        <taxon>Euteleostomi</taxon>
        <taxon>Mammalia</taxon>
        <taxon>Eutheria</taxon>
        <taxon>Euarchontoglires</taxon>
        <taxon>Primates</taxon>
        <taxon>Haplorrhini</taxon>
        <taxon>Catarrhini</taxon>
        <taxon>Hominidae</taxon>
        <taxon>Homo</taxon>
    </lineage>
</organism>
<feature type="initiator methionine" description="Removed" evidence="2">
    <location>
        <position position="1"/>
    </location>
</feature>
<feature type="chain" id="PRO_0000112016" description="ATP-dependent 6-phosphofructokinase, muscle type">
    <location>
        <begin position="2"/>
        <end position="780"/>
    </location>
</feature>
<feature type="region of interest" description="N-terminal catalytic PFK domain 1">
    <location>
        <begin position="2"/>
        <end position="390"/>
    </location>
</feature>
<feature type="region of interest" description="Interdomain linker">
    <location>
        <begin position="391"/>
        <end position="401"/>
    </location>
</feature>
<feature type="region of interest" description="C-terminal regulatory PFK domain 2">
    <location>
        <begin position="402"/>
        <end position="780"/>
    </location>
</feature>
<feature type="active site" description="Proton acceptor" evidence="5">
    <location>
        <position position="166"/>
    </location>
</feature>
<feature type="binding site" evidence="5">
    <location>
        <position position="25"/>
    </location>
    <ligand>
        <name>ATP</name>
        <dbReference type="ChEBI" id="CHEBI:30616"/>
    </ligand>
</feature>
<feature type="binding site" evidence="5">
    <location>
        <begin position="88"/>
        <end position="89"/>
    </location>
    <ligand>
        <name>ATP</name>
        <dbReference type="ChEBI" id="CHEBI:30616"/>
    </ligand>
</feature>
<feature type="binding site" evidence="5">
    <location>
        <begin position="118"/>
        <end position="121"/>
    </location>
    <ligand>
        <name>ATP</name>
        <dbReference type="ChEBI" id="CHEBI:30616"/>
    </ligand>
</feature>
<feature type="binding site" evidence="5">
    <location>
        <position position="119"/>
    </location>
    <ligand>
        <name>Mg(2+)</name>
        <dbReference type="ChEBI" id="CHEBI:18420"/>
        <note>catalytic</note>
    </ligand>
</feature>
<feature type="binding site" description="in other chain" evidence="5">
    <location>
        <begin position="164"/>
        <end position="166"/>
    </location>
    <ligand>
        <name>substrate</name>
        <note>ligand shared between dimeric partners</note>
    </ligand>
</feature>
<feature type="binding site" evidence="5">
    <location>
        <position position="201"/>
    </location>
    <ligand>
        <name>substrate</name>
        <note>ligand shared between dimeric partners</note>
    </ligand>
</feature>
<feature type="binding site" description="in other chain" evidence="5">
    <location>
        <begin position="208"/>
        <end position="210"/>
    </location>
    <ligand>
        <name>substrate</name>
        <note>ligand shared between dimeric partners</note>
    </ligand>
</feature>
<feature type="binding site" description="in other chain" evidence="5">
    <location>
        <position position="264"/>
    </location>
    <ligand>
        <name>substrate</name>
        <note>ligand shared between dimeric partners</note>
    </ligand>
</feature>
<feature type="binding site" evidence="5">
    <location>
        <position position="292"/>
    </location>
    <ligand>
        <name>substrate</name>
        <note>ligand shared between dimeric partners</note>
    </ligand>
</feature>
<feature type="binding site" description="in other chain" evidence="5">
    <location>
        <begin position="298"/>
        <end position="301"/>
    </location>
    <ligand>
        <name>substrate</name>
        <note>ligand shared between dimeric partners</note>
    </ligand>
</feature>
<feature type="binding site" description="in other chain" evidence="5">
    <location>
        <position position="471"/>
    </location>
    <ligand>
        <name>beta-D-fructose 2,6-bisphosphate</name>
        <dbReference type="ChEBI" id="CHEBI:58579"/>
        <note>allosteric activator; ligand shared between dimeric partners</note>
    </ligand>
</feature>
<feature type="binding site" description="in other chain" evidence="5">
    <location>
        <begin position="528"/>
        <end position="532"/>
    </location>
    <ligand>
        <name>beta-D-fructose 2,6-bisphosphate</name>
        <dbReference type="ChEBI" id="CHEBI:58579"/>
        <note>allosteric activator; ligand shared between dimeric partners</note>
    </ligand>
</feature>
<feature type="binding site" evidence="5">
    <location>
        <position position="566"/>
    </location>
    <ligand>
        <name>beta-D-fructose 2,6-bisphosphate</name>
        <dbReference type="ChEBI" id="CHEBI:58579"/>
        <note>allosteric activator; ligand shared between dimeric partners</note>
    </ligand>
</feature>
<feature type="binding site" description="in other chain" evidence="5">
    <location>
        <begin position="573"/>
        <end position="575"/>
    </location>
    <ligand>
        <name>beta-D-fructose 2,6-bisphosphate</name>
        <dbReference type="ChEBI" id="CHEBI:58579"/>
        <note>allosteric activator; ligand shared between dimeric partners</note>
    </ligand>
</feature>
<feature type="binding site" description="in other chain" evidence="5">
    <location>
        <position position="629"/>
    </location>
    <ligand>
        <name>beta-D-fructose 2,6-bisphosphate</name>
        <dbReference type="ChEBI" id="CHEBI:58579"/>
        <note>allosteric activator; ligand shared between dimeric partners</note>
    </ligand>
</feature>
<feature type="binding site" evidence="5">
    <location>
        <position position="655"/>
    </location>
    <ligand>
        <name>beta-D-fructose 2,6-bisphosphate</name>
        <dbReference type="ChEBI" id="CHEBI:58579"/>
        <note>allosteric activator; ligand shared between dimeric partners</note>
    </ligand>
</feature>
<feature type="binding site" description="in other chain" evidence="5">
    <location>
        <begin position="661"/>
        <end position="664"/>
    </location>
    <ligand>
        <name>beta-D-fructose 2,6-bisphosphate</name>
        <dbReference type="ChEBI" id="CHEBI:58579"/>
        <note>allosteric activator; ligand shared between dimeric partners</note>
    </ligand>
</feature>
<feature type="binding site" description="in other chain" evidence="5">
    <location>
        <position position="735"/>
    </location>
    <ligand>
        <name>beta-D-fructose 2,6-bisphosphate</name>
        <dbReference type="ChEBI" id="CHEBI:58579"/>
        <note>allosteric activator; ligand shared between dimeric partners</note>
    </ligand>
</feature>
<feature type="modified residue" description="N-acetylthreonine" evidence="2">
    <location>
        <position position="2"/>
    </location>
</feature>
<feature type="modified residue" description="Phosphoserine" evidence="4">
    <location>
        <position position="133"/>
    </location>
</feature>
<feature type="modified residue" description="Phosphoserine" evidence="3">
    <location>
        <position position="377"/>
    </location>
</feature>
<feature type="modified residue" description="N6-(2-hydroxyisobutyryl)lysine" evidence="8">
    <location>
        <position position="557"/>
    </location>
</feature>
<feature type="modified residue" description="Phosphoserine" evidence="16 17">
    <location>
        <position position="667"/>
    </location>
</feature>
<feature type="modified residue" description="Phosphoserine" evidence="2">
    <location>
        <position position="775"/>
    </location>
</feature>
<feature type="glycosylation site" description="O-linked (GlcNAc) serine" evidence="1">
    <location>
        <position position="530"/>
    </location>
</feature>
<feature type="splice variant" id="VSP_046125" description="In isoform 3." evidence="13">
    <original>M</original>
    <variation>MHKDEFHLKFFMCVIQSRQLVRTPQRTAGEASTSSMLIPKPPPKTDILKSLDTMDDPDTVGSIPVFKTEWIM</variation>
    <location>
        <position position="1"/>
    </location>
</feature>
<feature type="splice variant" id="VSP_004667" description="In isoform 2." evidence="14">
    <location>
        <begin position="282"/>
        <end position="312"/>
    </location>
</feature>
<feature type="sequence variant" id="VAR_006063" description="In GSD7; Ashkenazi; dbSNP:rs121918193." evidence="11">
    <original>R</original>
    <variation>L</variation>
    <location>
        <position position="39"/>
    </location>
</feature>
<feature type="sequence variant" id="VAR_006064" description="In GSD7; Italian; dbSNP:rs121918193." evidence="9">
    <original>R</original>
    <variation>P</variation>
    <location>
        <position position="39"/>
    </location>
</feature>
<feature type="sequence variant" id="VAR_072239" description="In GSD7; Italian." evidence="6">
    <original>G</original>
    <variation>V</variation>
    <location>
        <position position="57"/>
    </location>
</feature>
<feature type="sequence variant" id="VAR_006065" description="In dbSNP:rs2228500." evidence="10">
    <original>R</original>
    <variation>Q</variation>
    <location>
        <position position="100"/>
    </location>
</feature>
<feature type="sequence variant" id="VAR_072240" description="In GSD7; Italian." evidence="6">
    <original>S</original>
    <variation>C</variation>
    <location>
        <position position="180"/>
    </location>
</feature>
<feature type="sequence variant" id="VAR_006066" description="In GSD7; loss of activity shown by complementation assays in yeast; dbSNP:rs767265360." evidence="10">
    <original>G</original>
    <variation>D</variation>
    <location>
        <position position="209"/>
    </location>
</feature>
<feature type="sequence variant" id="VAR_072241" description="In GSD7; Spanish; complete loss of enzyme activity; dbSNP:rs1169383137." evidence="7">
    <original>D</original>
    <variation>G</variation>
    <location>
        <position position="309"/>
    </location>
</feature>
<feature type="sequence variant" id="VAR_006067" description="In GSD7; Italian; dbSNP:rs121918194." evidence="9">
    <original>D</original>
    <variation>A</variation>
    <location>
        <position position="543"/>
    </location>
</feature>
<feature type="sequence variant" id="VAR_072242" description="In GSD7; Italian." evidence="6">
    <original>D</original>
    <variation>A</variation>
    <location>
        <position position="591"/>
    </location>
</feature>
<feature type="sequence variant" id="VAR_006068" description="In GSD7; Japanese; dbSNP:rs121918196." evidence="12">
    <original>W</original>
    <variation>C</variation>
    <location>
        <position position="686"/>
    </location>
</feature>
<feature type="sequence variant" id="VAR_006069" description="In dbSNP:rs41291971." evidence="10">
    <original>R</original>
    <variation>H</variation>
    <location>
        <position position="696"/>
    </location>
</feature>
<feature type="sequence conflict" description="In Ref. 4; BAC86498." evidence="15" ref="4">
    <original>P</original>
    <variation>S</variation>
    <location>
        <position position="670"/>
    </location>
</feature>
<feature type="sequence conflict" description="In Ref. 4; BAC86498." evidence="15" ref="4">
    <original>H</original>
    <variation>L</variation>
    <location sequence="P08237-3">
        <position position="2"/>
    </location>
</feature>
<proteinExistence type="evidence at protein level"/>
<keyword id="KW-0002">3D-structure</keyword>
<keyword id="KW-0007">Acetylation</keyword>
<keyword id="KW-0021">Allosteric enzyme</keyword>
<keyword id="KW-0025">Alternative splicing</keyword>
<keyword id="KW-0067">ATP-binding</keyword>
<keyword id="KW-0963">Cytoplasm</keyword>
<keyword id="KW-0225">Disease variant</keyword>
<keyword id="KW-0322">Glycogen storage disease</keyword>
<keyword id="KW-0324">Glycolysis</keyword>
<keyword id="KW-0325">Glycoprotein</keyword>
<keyword id="KW-0379">Hydroxylation</keyword>
<keyword id="KW-0418">Kinase</keyword>
<keyword id="KW-0460">Magnesium</keyword>
<keyword id="KW-0479">Metal-binding</keyword>
<keyword id="KW-0547">Nucleotide-binding</keyword>
<keyword id="KW-0597">Phosphoprotein</keyword>
<keyword id="KW-1267">Proteomics identification</keyword>
<keyword id="KW-1185">Reference proteome</keyword>
<keyword id="KW-0808">Transferase</keyword>
<dbReference type="EC" id="2.7.1.11" evidence="5"/>
<dbReference type="EMBL" id="M59741">
    <property type="protein sequence ID" value="AAA82938.1"/>
    <property type="molecule type" value="Genomic_DNA"/>
</dbReference>
<dbReference type="EMBL" id="M59720">
    <property type="protein sequence ID" value="AAA82938.1"/>
    <property type="status" value="JOINED"/>
    <property type="molecule type" value="Genomic_DNA"/>
</dbReference>
<dbReference type="EMBL" id="M59721">
    <property type="protein sequence ID" value="AAA82938.1"/>
    <property type="status" value="JOINED"/>
    <property type="molecule type" value="Genomic_DNA"/>
</dbReference>
<dbReference type="EMBL" id="M59722">
    <property type="protein sequence ID" value="AAA82938.1"/>
    <property type="status" value="JOINED"/>
    <property type="molecule type" value="Genomic_DNA"/>
</dbReference>
<dbReference type="EMBL" id="M59723">
    <property type="protein sequence ID" value="AAA82938.1"/>
    <property type="status" value="JOINED"/>
    <property type="molecule type" value="Genomic_DNA"/>
</dbReference>
<dbReference type="EMBL" id="M59724">
    <property type="protein sequence ID" value="AAA82938.1"/>
    <property type="status" value="JOINED"/>
    <property type="molecule type" value="Genomic_DNA"/>
</dbReference>
<dbReference type="EMBL" id="M59725">
    <property type="protein sequence ID" value="AAA82938.1"/>
    <property type="status" value="JOINED"/>
    <property type="molecule type" value="Genomic_DNA"/>
</dbReference>
<dbReference type="EMBL" id="M59726">
    <property type="protein sequence ID" value="AAA82938.1"/>
    <property type="status" value="JOINED"/>
    <property type="molecule type" value="Genomic_DNA"/>
</dbReference>
<dbReference type="EMBL" id="M59727">
    <property type="protein sequence ID" value="AAA82938.1"/>
    <property type="status" value="JOINED"/>
    <property type="molecule type" value="Genomic_DNA"/>
</dbReference>
<dbReference type="EMBL" id="M59728">
    <property type="protein sequence ID" value="AAA82938.1"/>
    <property type="status" value="JOINED"/>
    <property type="molecule type" value="Genomic_DNA"/>
</dbReference>
<dbReference type="EMBL" id="M59729">
    <property type="protein sequence ID" value="AAA82938.1"/>
    <property type="status" value="JOINED"/>
    <property type="molecule type" value="Genomic_DNA"/>
</dbReference>
<dbReference type="EMBL" id="M59730">
    <property type="protein sequence ID" value="AAA82938.1"/>
    <property type="status" value="JOINED"/>
    <property type="molecule type" value="Genomic_DNA"/>
</dbReference>
<dbReference type="EMBL" id="M59731">
    <property type="protein sequence ID" value="AAA82938.1"/>
    <property type="status" value="JOINED"/>
    <property type="molecule type" value="Genomic_DNA"/>
</dbReference>
<dbReference type="EMBL" id="M59732">
    <property type="protein sequence ID" value="AAA82938.1"/>
    <property type="status" value="JOINED"/>
    <property type="molecule type" value="Genomic_DNA"/>
</dbReference>
<dbReference type="EMBL" id="M59733">
    <property type="protein sequence ID" value="AAA82938.1"/>
    <property type="status" value="JOINED"/>
    <property type="molecule type" value="Genomic_DNA"/>
</dbReference>
<dbReference type="EMBL" id="M59734">
    <property type="protein sequence ID" value="AAA82938.1"/>
    <property type="status" value="JOINED"/>
    <property type="molecule type" value="Genomic_DNA"/>
</dbReference>
<dbReference type="EMBL" id="M59735">
    <property type="protein sequence ID" value="AAA82938.1"/>
    <property type="status" value="JOINED"/>
    <property type="molecule type" value="Genomic_DNA"/>
</dbReference>
<dbReference type="EMBL" id="M59736">
    <property type="protein sequence ID" value="AAA82938.1"/>
    <property type="status" value="JOINED"/>
    <property type="molecule type" value="Genomic_DNA"/>
</dbReference>
<dbReference type="EMBL" id="M59737">
    <property type="protein sequence ID" value="AAA82938.1"/>
    <property type="status" value="JOINED"/>
    <property type="molecule type" value="Genomic_DNA"/>
</dbReference>
<dbReference type="EMBL" id="M59738">
    <property type="protein sequence ID" value="AAA82938.1"/>
    <property type="status" value="JOINED"/>
    <property type="molecule type" value="Genomic_DNA"/>
</dbReference>
<dbReference type="EMBL" id="M59739">
    <property type="protein sequence ID" value="AAA82938.1"/>
    <property type="status" value="JOINED"/>
    <property type="molecule type" value="Genomic_DNA"/>
</dbReference>
<dbReference type="EMBL" id="M59740">
    <property type="protein sequence ID" value="AAA82938.1"/>
    <property type="status" value="JOINED"/>
    <property type="molecule type" value="Genomic_DNA"/>
</dbReference>
<dbReference type="EMBL" id="M26066">
    <property type="protein sequence ID" value="AAA60068.1"/>
    <property type="molecule type" value="mRNA"/>
</dbReference>
<dbReference type="EMBL" id="Y00698">
    <property type="protein sequence ID" value="CAA68692.1"/>
    <property type="molecule type" value="mRNA"/>
</dbReference>
<dbReference type="EMBL" id="AK126229">
    <property type="protein sequence ID" value="BAC86498.1"/>
    <property type="molecule type" value="mRNA"/>
</dbReference>
<dbReference type="EMBL" id="AC004801">
    <property type="status" value="NOT_ANNOTATED_CDS"/>
    <property type="molecule type" value="Genomic_DNA"/>
</dbReference>
<dbReference type="EMBL" id="AC074029">
    <property type="status" value="NOT_ANNOTATED_CDS"/>
    <property type="molecule type" value="Genomic_DNA"/>
</dbReference>
<dbReference type="EMBL" id="BC000534">
    <property type="protein sequence ID" value="AAH00534.1"/>
    <property type="molecule type" value="mRNA"/>
</dbReference>
<dbReference type="EMBL" id="BC012799">
    <property type="protein sequence ID" value="AAH12799.1"/>
    <property type="molecule type" value="mRNA"/>
</dbReference>
<dbReference type="EMBL" id="BC013298">
    <property type="protein sequence ID" value="AAH13298.1"/>
    <property type="molecule type" value="mRNA"/>
</dbReference>
<dbReference type="EMBL" id="BC021203">
    <property type="protein sequence ID" value="AAH21203.1"/>
    <property type="molecule type" value="mRNA"/>
</dbReference>
<dbReference type="EMBL" id="J05533">
    <property type="protein sequence ID" value="AAA79220.1"/>
    <property type="molecule type" value="mRNA"/>
</dbReference>
<dbReference type="EMBL" id="M24925">
    <property type="protein sequence ID" value="AAA36436.1"/>
    <property type="molecule type" value="Genomic_DNA"/>
</dbReference>
<dbReference type="CCDS" id="CCDS53786.1">
    <molecule id="P08237-3"/>
</dbReference>
<dbReference type="CCDS" id="CCDS86295.1">
    <molecule id="P08237-2"/>
</dbReference>
<dbReference type="CCDS" id="CCDS8760.1">
    <molecule id="P08237-1"/>
</dbReference>
<dbReference type="PIR" id="A91605">
    <property type="entry name" value="KIHUFM"/>
</dbReference>
<dbReference type="RefSeq" id="NP_000280.1">
    <molecule id="P08237-1"/>
    <property type="nucleotide sequence ID" value="NM_000289.6"/>
</dbReference>
<dbReference type="RefSeq" id="NP_001160158.1">
    <molecule id="P08237-3"/>
    <property type="nucleotide sequence ID" value="NM_001166686.2"/>
</dbReference>
<dbReference type="RefSeq" id="NP_001160159.1">
    <molecule id="P08237-1"/>
    <property type="nucleotide sequence ID" value="NM_001166687.2"/>
</dbReference>
<dbReference type="RefSeq" id="NP_001160160.1">
    <molecule id="P08237-1"/>
    <property type="nucleotide sequence ID" value="NM_001166688.2"/>
</dbReference>
<dbReference type="RefSeq" id="NP_001341666.1">
    <molecule id="P08237-3"/>
    <property type="nucleotide sequence ID" value="NM_001354737.1"/>
</dbReference>
<dbReference type="RefSeq" id="NP_001341667.1">
    <molecule id="P08237-3"/>
    <property type="nucleotide sequence ID" value="NM_001354738.1"/>
</dbReference>
<dbReference type="RefSeq" id="NP_001341668.1">
    <molecule id="P08237-3"/>
    <property type="nucleotide sequence ID" value="NM_001354739.1"/>
</dbReference>
<dbReference type="RefSeq" id="NP_001341671.1">
    <molecule id="P08237-1"/>
    <property type="nucleotide sequence ID" value="NM_001354742.2"/>
</dbReference>
<dbReference type="RefSeq" id="NP_001341672.1">
    <molecule id="P08237-1"/>
    <property type="nucleotide sequence ID" value="NM_001354743.2"/>
</dbReference>
<dbReference type="RefSeq" id="NP_001341673.1">
    <molecule id="P08237-1"/>
    <property type="nucleotide sequence ID" value="NM_001354744.2"/>
</dbReference>
<dbReference type="RefSeq" id="NP_001350548.1">
    <molecule id="P08237-2"/>
    <property type="nucleotide sequence ID" value="NM_001363619.2"/>
</dbReference>
<dbReference type="RefSeq" id="XP_005269034.1">
    <property type="nucleotide sequence ID" value="XM_005268977.1"/>
</dbReference>
<dbReference type="RefSeq" id="XP_005269035.1">
    <property type="nucleotide sequence ID" value="XM_005268978.2"/>
</dbReference>
<dbReference type="RefSeq" id="XP_005269036.1">
    <property type="nucleotide sequence ID" value="XM_005268979.1"/>
</dbReference>
<dbReference type="RefSeq" id="XP_011536790.1">
    <property type="nucleotide sequence ID" value="XM_011538488.2"/>
</dbReference>
<dbReference type="RefSeq" id="XP_016874957.1">
    <property type="nucleotide sequence ID" value="XM_017019468.1"/>
</dbReference>
<dbReference type="RefSeq" id="XP_024304790.1">
    <molecule id="P08237-1"/>
    <property type="nucleotide sequence ID" value="XM_024449022.2"/>
</dbReference>
<dbReference type="RefSeq" id="XP_054228257.1">
    <molecule id="P08237-1"/>
    <property type="nucleotide sequence ID" value="XM_054372282.1"/>
</dbReference>
<dbReference type="PDB" id="4OMT">
    <property type="method" value="X-ray"/>
    <property type="resolution" value="6.00 A"/>
    <property type="chains" value="A=1-780"/>
</dbReference>
<dbReference type="PDBsum" id="4OMT"/>
<dbReference type="SMR" id="P08237"/>
<dbReference type="BioGRID" id="111234">
    <property type="interactions" value="220"/>
</dbReference>
<dbReference type="ComplexPortal" id="CPX-1997">
    <property type="entry name" value="6-phosphofructokinase, M4 homotetramer"/>
</dbReference>
<dbReference type="ComplexPortal" id="CPX-2000">
    <property type="entry name" value="6-phosphofructokinase, ML3 heterotetramer"/>
</dbReference>
<dbReference type="ComplexPortal" id="CPX-2001">
    <property type="entry name" value="6-phosphofructokinase, M2L2 heterotetramer"/>
</dbReference>
<dbReference type="ComplexPortal" id="CPX-2002">
    <property type="entry name" value="6-phosphofructokinase, M3L heterotetramer"/>
</dbReference>
<dbReference type="FunCoup" id="P08237">
    <property type="interactions" value="1706"/>
</dbReference>
<dbReference type="IntAct" id="P08237">
    <property type="interactions" value="49"/>
</dbReference>
<dbReference type="MINT" id="P08237"/>
<dbReference type="STRING" id="9606.ENSP00000496597"/>
<dbReference type="BindingDB" id="P08237"/>
<dbReference type="ChEMBL" id="CHEMBL3291"/>
<dbReference type="MoonProt" id="P08237"/>
<dbReference type="GlyCosmos" id="P08237">
    <property type="glycosylation" value="1 site, No reported glycans"/>
</dbReference>
<dbReference type="GlyGen" id="P08237">
    <property type="glycosylation" value="2 sites, 1 O-linked glycan (1 site)"/>
</dbReference>
<dbReference type="iPTMnet" id="P08237"/>
<dbReference type="MetOSite" id="P08237"/>
<dbReference type="PhosphoSitePlus" id="P08237"/>
<dbReference type="SwissPalm" id="P08237"/>
<dbReference type="BioMuta" id="PFKM"/>
<dbReference type="DMDM" id="125126"/>
<dbReference type="CPTAC" id="CPTAC-2760"/>
<dbReference type="CPTAC" id="CPTAC-2761"/>
<dbReference type="jPOST" id="P08237"/>
<dbReference type="MassIVE" id="P08237"/>
<dbReference type="PaxDb" id="9606-ENSP00000345771"/>
<dbReference type="PeptideAtlas" id="P08237"/>
<dbReference type="ProteomicsDB" id="52094">
    <molecule id="P08237-1"/>
</dbReference>
<dbReference type="ProteomicsDB" id="52095">
    <molecule id="P08237-2"/>
</dbReference>
<dbReference type="Pumba" id="P08237"/>
<dbReference type="Antibodypedia" id="1061">
    <property type="antibodies" value="482 antibodies from 38 providers"/>
</dbReference>
<dbReference type="DNASU" id="5213"/>
<dbReference type="Ensembl" id="ENST00000312352.11">
    <molecule id="P08237-1"/>
    <property type="protein sequence ID" value="ENSP00000309438.7"/>
    <property type="gene ID" value="ENSG00000152556.17"/>
</dbReference>
<dbReference type="Ensembl" id="ENST00000340802.12">
    <molecule id="P08237-3"/>
    <property type="protein sequence ID" value="ENSP00000345771.6"/>
    <property type="gene ID" value="ENSG00000152556.17"/>
</dbReference>
<dbReference type="Ensembl" id="ENST00000359794.11">
    <molecule id="P08237-1"/>
    <property type="protein sequence ID" value="ENSP00000352842.5"/>
    <property type="gene ID" value="ENSG00000152556.17"/>
</dbReference>
<dbReference type="Ensembl" id="ENST00000547587.5">
    <molecule id="P08237-1"/>
    <property type="protein sequence ID" value="ENSP00000449426.1"/>
    <property type="gene ID" value="ENSG00000152556.17"/>
</dbReference>
<dbReference type="Ensembl" id="ENST00000550345.6">
    <molecule id="P08237-1"/>
    <property type="protein sequence ID" value="ENSP00000450369.2"/>
    <property type="gene ID" value="ENSG00000152556.17"/>
</dbReference>
<dbReference type="Ensembl" id="ENST00000550924.6">
    <molecule id="P08237-1"/>
    <property type="protein sequence ID" value="ENSP00000446945.2"/>
    <property type="gene ID" value="ENSG00000152556.17"/>
</dbReference>
<dbReference type="Ensembl" id="ENST00000551339.6">
    <molecule id="P08237-1"/>
    <property type="protein sequence ID" value="ENSP00000448253.2"/>
    <property type="gene ID" value="ENSG00000152556.17"/>
</dbReference>
<dbReference type="Ensembl" id="ENST00000551804.5">
    <molecule id="P08237-2"/>
    <property type="protein sequence ID" value="ENSP00000448177.1"/>
    <property type="gene ID" value="ENSG00000152556.17"/>
</dbReference>
<dbReference type="GeneID" id="5213"/>
<dbReference type="KEGG" id="hsa:5213"/>
<dbReference type="MANE-Select" id="ENST00000359794.11">
    <property type="protein sequence ID" value="ENSP00000352842.5"/>
    <property type="RefSeq nucleotide sequence ID" value="NM_000289.6"/>
    <property type="RefSeq protein sequence ID" value="NP_000280.1"/>
</dbReference>
<dbReference type="UCSC" id="uc001rrb.3">
    <molecule id="P08237-1"/>
    <property type="organism name" value="human"/>
</dbReference>
<dbReference type="AGR" id="HGNC:8877"/>
<dbReference type="CTD" id="5213"/>
<dbReference type="DisGeNET" id="5213"/>
<dbReference type="GeneCards" id="PFKM"/>
<dbReference type="HGNC" id="HGNC:8877">
    <property type="gene designation" value="PFKM"/>
</dbReference>
<dbReference type="HPA" id="ENSG00000152556">
    <property type="expression patterns" value="Group enriched (skeletal muscle, tongue)"/>
</dbReference>
<dbReference type="MalaCards" id="PFKM"/>
<dbReference type="MIM" id="232800">
    <property type="type" value="phenotype"/>
</dbReference>
<dbReference type="MIM" id="610681">
    <property type="type" value="gene"/>
</dbReference>
<dbReference type="neXtProt" id="NX_P08237"/>
<dbReference type="OpenTargets" id="ENSG00000152556"/>
<dbReference type="Orphanet" id="371">
    <property type="disease" value="Glycogen storage disease due to muscle phosphofructokinase deficiency"/>
</dbReference>
<dbReference type="PharmGKB" id="PA33216"/>
<dbReference type="VEuPathDB" id="HostDB:ENSG00000152556"/>
<dbReference type="eggNOG" id="KOG2440">
    <property type="taxonomic scope" value="Eukaryota"/>
</dbReference>
<dbReference type="GeneTree" id="ENSGT00940000155440"/>
<dbReference type="HOGENOM" id="CLU_011053_0_0_1"/>
<dbReference type="InParanoid" id="P08237"/>
<dbReference type="OrthoDB" id="537915at2759"/>
<dbReference type="PAN-GO" id="P08237">
    <property type="GO annotations" value="11 GO annotations based on evolutionary models"/>
</dbReference>
<dbReference type="PhylomeDB" id="P08237"/>
<dbReference type="TreeFam" id="TF300411"/>
<dbReference type="BioCyc" id="MetaCyc:HS07832-MONOMER"/>
<dbReference type="BRENDA" id="2.7.1.11">
    <property type="organism ID" value="2681"/>
</dbReference>
<dbReference type="PathwayCommons" id="P08237"/>
<dbReference type="Reactome" id="R-HSA-70171">
    <property type="pathway name" value="Glycolysis"/>
</dbReference>
<dbReference type="SABIO-RK" id="P08237"/>
<dbReference type="SignaLink" id="P08237"/>
<dbReference type="SIGNOR" id="P08237"/>
<dbReference type="UniPathway" id="UPA00109">
    <property type="reaction ID" value="UER00182"/>
</dbReference>
<dbReference type="BioGRID-ORCS" id="5213">
    <property type="hits" value="35 hits in 1159 CRISPR screens"/>
</dbReference>
<dbReference type="CD-CODE" id="FB4E32DD">
    <property type="entry name" value="Presynaptic clusters and postsynaptic densities"/>
</dbReference>
<dbReference type="ChiTaRS" id="PFKM">
    <property type="organism name" value="human"/>
</dbReference>
<dbReference type="EvolutionaryTrace" id="P08237"/>
<dbReference type="GeneWiki" id="PFKM"/>
<dbReference type="GenomeRNAi" id="5213"/>
<dbReference type="Pharos" id="P08237">
    <property type="development level" value="Tbio"/>
</dbReference>
<dbReference type="PRO" id="PR:P08237"/>
<dbReference type="Proteomes" id="UP000005640">
    <property type="component" value="Chromosome 12"/>
</dbReference>
<dbReference type="RNAct" id="P08237">
    <property type="molecule type" value="protein"/>
</dbReference>
<dbReference type="Bgee" id="ENSG00000152556">
    <property type="expression patterns" value="Expressed in gluteal muscle and 212 other cell types or tissues"/>
</dbReference>
<dbReference type="ExpressionAtlas" id="P08237">
    <property type="expression patterns" value="baseline and differential"/>
</dbReference>
<dbReference type="GO" id="GO:0005945">
    <property type="term" value="C:6-phosphofructokinase complex"/>
    <property type="evidence" value="ECO:0000314"/>
    <property type="project" value="UniProtKB"/>
</dbReference>
<dbReference type="GO" id="GO:0016324">
    <property type="term" value="C:apical plasma membrane"/>
    <property type="evidence" value="ECO:0000314"/>
    <property type="project" value="UniProtKB"/>
</dbReference>
<dbReference type="GO" id="GO:0005829">
    <property type="term" value="C:cytosol"/>
    <property type="evidence" value="ECO:0000304"/>
    <property type="project" value="Reactome"/>
</dbReference>
<dbReference type="GO" id="GO:0016020">
    <property type="term" value="C:membrane"/>
    <property type="evidence" value="ECO:0000318"/>
    <property type="project" value="GO_Central"/>
</dbReference>
<dbReference type="GO" id="GO:0005634">
    <property type="term" value="C:nucleus"/>
    <property type="evidence" value="ECO:0000314"/>
    <property type="project" value="CAFA"/>
</dbReference>
<dbReference type="GO" id="GO:0097228">
    <property type="term" value="C:sperm principal piece"/>
    <property type="evidence" value="ECO:0007669"/>
    <property type="project" value="Ensembl"/>
</dbReference>
<dbReference type="GO" id="GO:0003872">
    <property type="term" value="F:6-phosphofructokinase activity"/>
    <property type="evidence" value="ECO:0000314"/>
    <property type="project" value="UniProtKB"/>
</dbReference>
<dbReference type="GO" id="GO:0005524">
    <property type="term" value="F:ATP binding"/>
    <property type="evidence" value="ECO:0000314"/>
    <property type="project" value="BHF-UCL"/>
</dbReference>
<dbReference type="GO" id="GO:0070061">
    <property type="term" value="F:fructose binding"/>
    <property type="evidence" value="ECO:0000314"/>
    <property type="project" value="BHF-UCL"/>
</dbReference>
<dbReference type="GO" id="GO:0070095">
    <property type="term" value="F:fructose-6-phosphate binding"/>
    <property type="evidence" value="ECO:0000318"/>
    <property type="project" value="GO_Central"/>
</dbReference>
<dbReference type="GO" id="GO:0042802">
    <property type="term" value="F:identical protein binding"/>
    <property type="evidence" value="ECO:0000353"/>
    <property type="project" value="IntAct"/>
</dbReference>
<dbReference type="GO" id="GO:0019900">
    <property type="term" value="F:kinase binding"/>
    <property type="evidence" value="ECO:0000353"/>
    <property type="project" value="BHF-UCL"/>
</dbReference>
<dbReference type="GO" id="GO:0046872">
    <property type="term" value="F:metal ion binding"/>
    <property type="evidence" value="ECO:0007669"/>
    <property type="project" value="UniProtKB-KW"/>
</dbReference>
<dbReference type="GO" id="GO:0061621">
    <property type="term" value="P:canonical glycolysis"/>
    <property type="evidence" value="ECO:0000318"/>
    <property type="project" value="GO_Central"/>
</dbReference>
<dbReference type="GO" id="GO:0030388">
    <property type="term" value="P:fructose 1,6-bisphosphate metabolic process"/>
    <property type="evidence" value="ECO:0000318"/>
    <property type="project" value="GO_Central"/>
</dbReference>
<dbReference type="GO" id="GO:0006002">
    <property type="term" value="P:fructose 6-phosphate metabolic process"/>
    <property type="evidence" value="ECO:0000314"/>
    <property type="project" value="BHF-UCL"/>
</dbReference>
<dbReference type="GO" id="GO:0042593">
    <property type="term" value="P:glucose homeostasis"/>
    <property type="evidence" value="ECO:0007669"/>
    <property type="project" value="Ensembl"/>
</dbReference>
<dbReference type="GO" id="GO:0005980">
    <property type="term" value="P:glycogen catabolic process"/>
    <property type="evidence" value="ECO:0007669"/>
    <property type="project" value="Ensembl"/>
</dbReference>
<dbReference type="GO" id="GO:0093001">
    <property type="term" value="P:glycolysis from storage polysaccharide through glucose-1-phosphate"/>
    <property type="evidence" value="ECO:0007669"/>
    <property type="project" value="Ensembl"/>
</dbReference>
<dbReference type="GO" id="GO:0006096">
    <property type="term" value="P:glycolytic process"/>
    <property type="evidence" value="ECO:0000315"/>
    <property type="project" value="UniProtKB"/>
</dbReference>
<dbReference type="GO" id="GO:0061615">
    <property type="term" value="P:glycolytic process through fructose-6-phosphate"/>
    <property type="evidence" value="ECO:0000315"/>
    <property type="project" value="CAFA"/>
</dbReference>
<dbReference type="GO" id="GO:0046716">
    <property type="term" value="P:muscle cell cellular homeostasis"/>
    <property type="evidence" value="ECO:0000315"/>
    <property type="project" value="BHF-UCL"/>
</dbReference>
<dbReference type="GO" id="GO:0032024">
    <property type="term" value="P:positive regulation of insulin secretion"/>
    <property type="evidence" value="ECO:0007669"/>
    <property type="project" value="Ensembl"/>
</dbReference>
<dbReference type="GO" id="GO:0045944">
    <property type="term" value="P:positive regulation of transcription by RNA polymerase II"/>
    <property type="evidence" value="ECO:0000315"/>
    <property type="project" value="CAFA"/>
</dbReference>
<dbReference type="CDD" id="cd00764">
    <property type="entry name" value="Eukaryotic_PFK"/>
    <property type="match status" value="1"/>
</dbReference>
<dbReference type="FunFam" id="3.40.50.450:FF:000004">
    <property type="entry name" value="ATP-dependent 6-phosphofructokinase"/>
    <property type="match status" value="1"/>
</dbReference>
<dbReference type="FunFam" id="3.40.50.460:FF:000001">
    <property type="entry name" value="ATP-dependent 6-phosphofructokinase"/>
    <property type="match status" value="1"/>
</dbReference>
<dbReference type="FunFam" id="3.40.50.460:FF:000003">
    <property type="entry name" value="ATP-dependent 6-phosphofructokinase"/>
    <property type="match status" value="1"/>
</dbReference>
<dbReference type="FunFam" id="3.40.50.450:FF:000043">
    <property type="entry name" value="ATP-dependent 6-phosphofructokinase, platelet type"/>
    <property type="match status" value="1"/>
</dbReference>
<dbReference type="Gene3D" id="3.40.50.450">
    <property type="match status" value="2"/>
</dbReference>
<dbReference type="Gene3D" id="3.40.50.460">
    <property type="entry name" value="Phosphofructokinase domain"/>
    <property type="match status" value="2"/>
</dbReference>
<dbReference type="HAMAP" id="MF_03184">
    <property type="entry name" value="Phosphofructokinase_I_E"/>
    <property type="match status" value="1"/>
</dbReference>
<dbReference type="InterPro" id="IPR009161">
    <property type="entry name" value="6-Pfructokinase_euk"/>
</dbReference>
<dbReference type="InterPro" id="IPR022953">
    <property type="entry name" value="ATP_PFK"/>
</dbReference>
<dbReference type="InterPro" id="IPR041914">
    <property type="entry name" value="PFK_vert-type"/>
</dbReference>
<dbReference type="InterPro" id="IPR015912">
    <property type="entry name" value="Phosphofructokinase_CS"/>
</dbReference>
<dbReference type="InterPro" id="IPR000023">
    <property type="entry name" value="Phosphofructokinase_dom"/>
</dbReference>
<dbReference type="InterPro" id="IPR035966">
    <property type="entry name" value="PKF_sf"/>
</dbReference>
<dbReference type="NCBIfam" id="TIGR02478">
    <property type="entry name" value="6PF1K_euk"/>
    <property type="match status" value="1"/>
</dbReference>
<dbReference type="PANTHER" id="PTHR13697:SF59">
    <property type="entry name" value="ATP-DEPENDENT 6-PHOSPHOFRUCTOKINASE, MUSCLE TYPE"/>
    <property type="match status" value="1"/>
</dbReference>
<dbReference type="PANTHER" id="PTHR13697">
    <property type="entry name" value="PHOSPHOFRUCTOKINASE"/>
    <property type="match status" value="1"/>
</dbReference>
<dbReference type="Pfam" id="PF00365">
    <property type="entry name" value="PFK"/>
    <property type="match status" value="2"/>
</dbReference>
<dbReference type="PIRSF" id="PIRSF000533">
    <property type="entry name" value="ATP_PFK_euk"/>
    <property type="match status" value="1"/>
</dbReference>
<dbReference type="PRINTS" id="PR00476">
    <property type="entry name" value="PHFRCTKINASE"/>
</dbReference>
<dbReference type="SUPFAM" id="SSF53784">
    <property type="entry name" value="Phosphofructokinase"/>
    <property type="match status" value="2"/>
</dbReference>
<dbReference type="PROSITE" id="PS00433">
    <property type="entry name" value="PHOSPHOFRUCTOKINASE"/>
    <property type="match status" value="2"/>
</dbReference>
<sequence>MTHEEHHAAKTLGIGKAIAVLTSGGDAQGMNAAVRAVVRVGIFTGARVFFVHEGYQGLVDGGDHIKEATWESVSMMLQLGGTVIGSARCKDFREREGRLRAAYNLVKRGITNLCVIGGDGSLTGADTFRSEWSDLLSDLQKAGKITDEEATKSSYLNIVGLVGSIDNDFCGTDMTIGTDSALHRIMEIVDAITTTAQSHQRTFVLEVMGRHCGYLALVTSLSCGADWVFIPECPPDDDWEEHLCRRLSETRTRGSRLNIIIVAEGAIDKNGKPITSEDIKNLVVKRLGYDTRVTVLGHVQRGGTPSAFDRILGSRMGVEAVMALLEGTPDTPACVVSLSGNQAVRLPLMECVQVTKDVTKAMDEKKFDEALKLRGRSFMNNWEVYKLLAHVRPPVSKSGSHTVAVMNVGAPAAGMNAAVRSTVRIGLIQGNRVLVVHDGFEGLAKGQIEEAGWSYVGGWTGQGGSKLGTKRTLPKKSFEQISANITKFNIQGLVIIGGFEAYTGGLELMEGRKQFDELCIPFVVIPATVSNNVPGSDFSVGADTALNTICTTCDRIKQSAAGTKRRVFIIETMGGYCGYLATMAGLAAGADAAYIFEEPFTIRDLQANVEHLVQKMKTTVKRGLVLRNEKCNENYTTDFIFNLYSEEGKGIFDSRKNVLGHMQQGGSPTPFDRNFATKMGAKAMNWMSGKIKESYRNGRIFANTPDSGCVLGMRKRALVFQPVAELKDQTDFEHRIPKEQWWLKLRPILKILAKYEIDLDTSDHAHLEHITRKRSGEAAV</sequence>
<reference key="1">
    <citation type="journal article" date="1991" name="Gene">
        <title>Structure of the entire human muscle phosphofructokinase-encoding gene: a two-promoter system.</title>
        <authorList>
            <person name="Yamasaki T."/>
            <person name="Nakajima H."/>
            <person name="Kono N."/>
            <person name="Hotta K."/>
            <person name="Yamada K."/>
            <person name="Imai E."/>
            <person name="Kuwajima M."/>
            <person name="Noguchi T."/>
            <person name="Tanaka T."/>
            <person name="Tarui S."/>
        </authorList>
    </citation>
    <scope>NUCLEOTIDE SEQUENCE [GENOMIC DNA]</scope>
    <source>
        <tissue>Muscle</tissue>
    </source>
</reference>
<reference key="2">
    <citation type="journal article" date="1989" name="Gene">
        <title>Cloning and expression of a human muscle phosphofructokinase cDNA.</title>
        <authorList>
            <person name="Sharma P.M."/>
            <person name="Reddy G.R."/>
            <person name="Vora S."/>
            <person name="Babior B.M."/>
            <person name="McLachlan A."/>
        </authorList>
    </citation>
    <scope>NUCLEOTIDE SEQUENCE [MRNA]</scope>
    <source>
        <tissue>Muscle</tissue>
    </source>
</reference>
<reference key="3">
    <citation type="journal article" date="1987" name="FEBS Lett.">
        <title>Cloning of human muscle phosphofructokinase cDNA.</title>
        <authorList>
            <person name="Nakajima H."/>
            <person name="Noguchi T."/>
            <person name="Yamasaki T."/>
            <person name="Kono N."/>
            <person name="Tanaka T."/>
            <person name="Tarui S."/>
        </authorList>
    </citation>
    <scope>NUCLEOTIDE SEQUENCE [MRNA]</scope>
    <source>
        <tissue>Muscle</tissue>
    </source>
</reference>
<reference key="4">
    <citation type="journal article" date="2004" name="Nat. Genet.">
        <title>Complete sequencing and characterization of 21,243 full-length human cDNAs.</title>
        <authorList>
            <person name="Ota T."/>
            <person name="Suzuki Y."/>
            <person name="Nishikawa T."/>
            <person name="Otsuki T."/>
            <person name="Sugiyama T."/>
            <person name="Irie R."/>
            <person name="Wakamatsu A."/>
            <person name="Hayashi K."/>
            <person name="Sato H."/>
            <person name="Nagai K."/>
            <person name="Kimura K."/>
            <person name="Makita H."/>
            <person name="Sekine M."/>
            <person name="Obayashi M."/>
            <person name="Nishi T."/>
            <person name="Shibahara T."/>
            <person name="Tanaka T."/>
            <person name="Ishii S."/>
            <person name="Yamamoto J."/>
            <person name="Saito K."/>
            <person name="Kawai Y."/>
            <person name="Isono Y."/>
            <person name="Nakamura Y."/>
            <person name="Nagahari K."/>
            <person name="Murakami K."/>
            <person name="Yasuda T."/>
            <person name="Iwayanagi T."/>
            <person name="Wagatsuma M."/>
            <person name="Shiratori A."/>
            <person name="Sudo H."/>
            <person name="Hosoiri T."/>
            <person name="Kaku Y."/>
            <person name="Kodaira H."/>
            <person name="Kondo H."/>
            <person name="Sugawara M."/>
            <person name="Takahashi M."/>
            <person name="Kanda K."/>
            <person name="Yokoi T."/>
            <person name="Furuya T."/>
            <person name="Kikkawa E."/>
            <person name="Omura Y."/>
            <person name="Abe K."/>
            <person name="Kamihara K."/>
            <person name="Katsuta N."/>
            <person name="Sato K."/>
            <person name="Tanikawa M."/>
            <person name="Yamazaki M."/>
            <person name="Ninomiya K."/>
            <person name="Ishibashi T."/>
            <person name="Yamashita H."/>
            <person name="Murakawa K."/>
            <person name="Fujimori K."/>
            <person name="Tanai H."/>
            <person name="Kimata M."/>
            <person name="Watanabe M."/>
            <person name="Hiraoka S."/>
            <person name="Chiba Y."/>
            <person name="Ishida S."/>
            <person name="Ono Y."/>
            <person name="Takiguchi S."/>
            <person name="Watanabe S."/>
            <person name="Yosida M."/>
            <person name="Hotuta T."/>
            <person name="Kusano J."/>
            <person name="Kanehori K."/>
            <person name="Takahashi-Fujii A."/>
            <person name="Hara H."/>
            <person name="Tanase T.-O."/>
            <person name="Nomura Y."/>
            <person name="Togiya S."/>
            <person name="Komai F."/>
            <person name="Hara R."/>
            <person name="Takeuchi K."/>
            <person name="Arita M."/>
            <person name="Imose N."/>
            <person name="Musashino K."/>
            <person name="Yuuki H."/>
            <person name="Oshima A."/>
            <person name="Sasaki N."/>
            <person name="Aotsuka S."/>
            <person name="Yoshikawa Y."/>
            <person name="Matsunawa H."/>
            <person name="Ichihara T."/>
            <person name="Shiohata N."/>
            <person name="Sano S."/>
            <person name="Moriya S."/>
            <person name="Momiyama H."/>
            <person name="Satoh N."/>
            <person name="Takami S."/>
            <person name="Terashima Y."/>
            <person name="Suzuki O."/>
            <person name="Nakagawa S."/>
            <person name="Senoh A."/>
            <person name="Mizoguchi H."/>
            <person name="Goto Y."/>
            <person name="Shimizu F."/>
            <person name="Wakebe H."/>
            <person name="Hishigaki H."/>
            <person name="Watanabe T."/>
            <person name="Sugiyama A."/>
            <person name="Takemoto M."/>
            <person name="Kawakami B."/>
            <person name="Yamazaki M."/>
            <person name="Watanabe K."/>
            <person name="Kumagai A."/>
            <person name="Itakura S."/>
            <person name="Fukuzumi Y."/>
            <person name="Fujimori Y."/>
            <person name="Komiyama M."/>
            <person name="Tashiro H."/>
            <person name="Tanigami A."/>
            <person name="Fujiwara T."/>
            <person name="Ono T."/>
            <person name="Yamada K."/>
            <person name="Fujii Y."/>
            <person name="Ozaki K."/>
            <person name="Hirao M."/>
            <person name="Ohmori Y."/>
            <person name="Kawabata A."/>
            <person name="Hikiji T."/>
            <person name="Kobatake N."/>
            <person name="Inagaki H."/>
            <person name="Ikema Y."/>
            <person name="Okamoto S."/>
            <person name="Okitani R."/>
            <person name="Kawakami T."/>
            <person name="Noguchi S."/>
            <person name="Itoh T."/>
            <person name="Shigeta K."/>
            <person name="Senba T."/>
            <person name="Matsumura K."/>
            <person name="Nakajima Y."/>
            <person name="Mizuno T."/>
            <person name="Morinaga M."/>
            <person name="Sasaki M."/>
            <person name="Togashi T."/>
            <person name="Oyama M."/>
            <person name="Hata H."/>
            <person name="Watanabe M."/>
            <person name="Komatsu T."/>
            <person name="Mizushima-Sugano J."/>
            <person name="Satoh T."/>
            <person name="Shirai Y."/>
            <person name="Takahashi Y."/>
            <person name="Nakagawa K."/>
            <person name="Okumura K."/>
            <person name="Nagase T."/>
            <person name="Nomura N."/>
            <person name="Kikuchi H."/>
            <person name="Masuho Y."/>
            <person name="Yamashita R."/>
            <person name="Nakai K."/>
            <person name="Yada T."/>
            <person name="Nakamura Y."/>
            <person name="Ohara O."/>
            <person name="Isogai T."/>
            <person name="Sugano S."/>
        </authorList>
    </citation>
    <scope>NUCLEOTIDE SEQUENCE [LARGE SCALE MRNA] (ISOFORM 3)</scope>
    <source>
        <tissue>Thymus</tissue>
    </source>
</reference>
<reference key="5">
    <citation type="journal article" date="2006" name="Nature">
        <title>The finished DNA sequence of human chromosome 12.</title>
        <authorList>
            <person name="Scherer S.E."/>
            <person name="Muzny D.M."/>
            <person name="Buhay C.J."/>
            <person name="Chen R."/>
            <person name="Cree A."/>
            <person name="Ding Y."/>
            <person name="Dugan-Rocha S."/>
            <person name="Gill R."/>
            <person name="Gunaratne P."/>
            <person name="Harris R.A."/>
            <person name="Hawes A.C."/>
            <person name="Hernandez J."/>
            <person name="Hodgson A.V."/>
            <person name="Hume J."/>
            <person name="Jackson A."/>
            <person name="Khan Z.M."/>
            <person name="Kovar-Smith C."/>
            <person name="Lewis L.R."/>
            <person name="Lozado R.J."/>
            <person name="Metzker M.L."/>
            <person name="Milosavljevic A."/>
            <person name="Miner G.R."/>
            <person name="Montgomery K.T."/>
            <person name="Morgan M.B."/>
            <person name="Nazareth L.V."/>
            <person name="Scott G."/>
            <person name="Sodergren E."/>
            <person name="Song X.-Z."/>
            <person name="Steffen D."/>
            <person name="Lovering R.C."/>
            <person name="Wheeler D.A."/>
            <person name="Worley K.C."/>
            <person name="Yuan Y."/>
            <person name="Zhang Z."/>
            <person name="Adams C.Q."/>
            <person name="Ansari-Lari M.A."/>
            <person name="Ayele M."/>
            <person name="Brown M.J."/>
            <person name="Chen G."/>
            <person name="Chen Z."/>
            <person name="Clerc-Blankenburg K.P."/>
            <person name="Davis C."/>
            <person name="Delgado O."/>
            <person name="Dinh H.H."/>
            <person name="Draper H."/>
            <person name="Gonzalez-Garay M.L."/>
            <person name="Havlak P."/>
            <person name="Jackson L.R."/>
            <person name="Jacob L.S."/>
            <person name="Kelly S.H."/>
            <person name="Li L."/>
            <person name="Li Z."/>
            <person name="Liu J."/>
            <person name="Liu W."/>
            <person name="Lu J."/>
            <person name="Maheshwari M."/>
            <person name="Nguyen B.-V."/>
            <person name="Okwuonu G.O."/>
            <person name="Pasternak S."/>
            <person name="Perez L.M."/>
            <person name="Plopper F.J.H."/>
            <person name="Santibanez J."/>
            <person name="Shen H."/>
            <person name="Tabor P.E."/>
            <person name="Verduzco D."/>
            <person name="Waldron L."/>
            <person name="Wang Q."/>
            <person name="Williams G.A."/>
            <person name="Zhang J."/>
            <person name="Zhou J."/>
            <person name="Allen C.C."/>
            <person name="Amin A.G."/>
            <person name="Anyalebechi V."/>
            <person name="Bailey M."/>
            <person name="Barbaria J.A."/>
            <person name="Bimage K.E."/>
            <person name="Bryant N.P."/>
            <person name="Burch P.E."/>
            <person name="Burkett C.E."/>
            <person name="Burrell K.L."/>
            <person name="Calderon E."/>
            <person name="Cardenas V."/>
            <person name="Carter K."/>
            <person name="Casias K."/>
            <person name="Cavazos I."/>
            <person name="Cavazos S.R."/>
            <person name="Ceasar H."/>
            <person name="Chacko J."/>
            <person name="Chan S.N."/>
            <person name="Chavez D."/>
            <person name="Christopoulos C."/>
            <person name="Chu J."/>
            <person name="Cockrell R."/>
            <person name="Cox C.D."/>
            <person name="Dang M."/>
            <person name="Dathorne S.R."/>
            <person name="David R."/>
            <person name="Davis C.M."/>
            <person name="Davy-Carroll L."/>
            <person name="Deshazo D.R."/>
            <person name="Donlin J.E."/>
            <person name="D'Souza L."/>
            <person name="Eaves K.A."/>
            <person name="Egan A."/>
            <person name="Emery-Cohen A.J."/>
            <person name="Escotto M."/>
            <person name="Flagg N."/>
            <person name="Forbes L.D."/>
            <person name="Gabisi A.M."/>
            <person name="Garza M."/>
            <person name="Hamilton C."/>
            <person name="Henderson N."/>
            <person name="Hernandez O."/>
            <person name="Hines S."/>
            <person name="Hogues M.E."/>
            <person name="Huang M."/>
            <person name="Idlebird D.G."/>
            <person name="Johnson R."/>
            <person name="Jolivet A."/>
            <person name="Jones S."/>
            <person name="Kagan R."/>
            <person name="King L.M."/>
            <person name="Leal B."/>
            <person name="Lebow H."/>
            <person name="Lee S."/>
            <person name="LeVan J.M."/>
            <person name="Lewis L.C."/>
            <person name="London P."/>
            <person name="Lorensuhewa L.M."/>
            <person name="Loulseged H."/>
            <person name="Lovett D.A."/>
            <person name="Lucier A."/>
            <person name="Lucier R.L."/>
            <person name="Ma J."/>
            <person name="Madu R.C."/>
            <person name="Mapua P."/>
            <person name="Martindale A.D."/>
            <person name="Martinez E."/>
            <person name="Massey E."/>
            <person name="Mawhiney S."/>
            <person name="Meador M.G."/>
            <person name="Mendez S."/>
            <person name="Mercado C."/>
            <person name="Mercado I.C."/>
            <person name="Merritt C.E."/>
            <person name="Miner Z.L."/>
            <person name="Minja E."/>
            <person name="Mitchell T."/>
            <person name="Mohabbat F."/>
            <person name="Mohabbat K."/>
            <person name="Montgomery B."/>
            <person name="Moore N."/>
            <person name="Morris S."/>
            <person name="Munidasa M."/>
            <person name="Ngo R.N."/>
            <person name="Nguyen N.B."/>
            <person name="Nickerson E."/>
            <person name="Nwaokelemeh O.O."/>
            <person name="Nwokenkwo S."/>
            <person name="Obregon M."/>
            <person name="Oguh M."/>
            <person name="Oragunye N."/>
            <person name="Oviedo R.J."/>
            <person name="Parish B.J."/>
            <person name="Parker D.N."/>
            <person name="Parrish J."/>
            <person name="Parks K.L."/>
            <person name="Paul H.A."/>
            <person name="Payton B.A."/>
            <person name="Perez A."/>
            <person name="Perrin W."/>
            <person name="Pickens A."/>
            <person name="Primus E.L."/>
            <person name="Pu L.-L."/>
            <person name="Puazo M."/>
            <person name="Quiles M.M."/>
            <person name="Quiroz J.B."/>
            <person name="Rabata D."/>
            <person name="Reeves K."/>
            <person name="Ruiz S.J."/>
            <person name="Shao H."/>
            <person name="Sisson I."/>
            <person name="Sonaike T."/>
            <person name="Sorelle R.P."/>
            <person name="Sutton A.E."/>
            <person name="Svatek A.F."/>
            <person name="Svetz L.A."/>
            <person name="Tamerisa K.S."/>
            <person name="Taylor T.R."/>
            <person name="Teague B."/>
            <person name="Thomas N."/>
            <person name="Thorn R.D."/>
            <person name="Trejos Z.Y."/>
            <person name="Trevino B.K."/>
            <person name="Ukegbu O.N."/>
            <person name="Urban J.B."/>
            <person name="Vasquez L.I."/>
            <person name="Vera V.A."/>
            <person name="Villasana D.M."/>
            <person name="Wang L."/>
            <person name="Ward-Moore S."/>
            <person name="Warren J.T."/>
            <person name="Wei X."/>
            <person name="White F."/>
            <person name="Williamson A.L."/>
            <person name="Wleczyk R."/>
            <person name="Wooden H.S."/>
            <person name="Wooden S.H."/>
            <person name="Yen J."/>
            <person name="Yoon L."/>
            <person name="Yoon V."/>
            <person name="Zorrilla S.E."/>
            <person name="Nelson D."/>
            <person name="Kucherlapati R."/>
            <person name="Weinstock G."/>
            <person name="Gibbs R.A."/>
        </authorList>
    </citation>
    <scope>NUCLEOTIDE SEQUENCE [LARGE SCALE GENOMIC DNA]</scope>
</reference>
<reference key="6">
    <citation type="journal article" date="2004" name="Genome Res.">
        <title>The status, quality, and expansion of the NIH full-length cDNA project: the Mammalian Gene Collection (MGC).</title>
        <authorList>
            <consortium name="The MGC Project Team"/>
        </authorList>
    </citation>
    <scope>NUCLEOTIDE SEQUENCE [LARGE SCALE MRNA] (ISOFORM 1)</scope>
    <source>
        <tissue>Brain</tissue>
        <tissue>Muscle</tissue>
    </source>
</reference>
<reference key="7">
    <citation type="journal article" date="1990" name="J. Biol. Chem.">
        <title>Alternative splicing of the transcript encoding the human muscle isoenzyme of phosphofructokinase.</title>
        <authorList>
            <person name="Sharma P.M."/>
            <person name="Reddy G.R."/>
            <person name="Babior B.M."/>
            <person name="McLachlan A."/>
        </authorList>
    </citation>
    <scope>NUCLEOTIDE SEQUENCE [MRNA] OF 272-681 (ISOFORM 2)</scope>
    <source>
        <tissue>Muscle</tissue>
    </source>
</reference>
<reference key="8">
    <citation type="journal article" date="1989" name="Gene">
        <title>Human 6-phosphofructo-1-kinase gene has an additional intron upstream of start codon.</title>
        <authorList>
            <person name="Valdez B.C."/>
            <person name="Chen Z."/>
            <person name="Sosa M.G."/>
            <person name="Younathan E.S."/>
            <person name="Chang S.H."/>
        </authorList>
    </citation>
    <scope>NUCLEOTIDE SEQUENCE [GENOMIC DNA] OF 1-28</scope>
    <source>
        <tissue>Muscle</tissue>
    </source>
</reference>
<reference key="9">
    <citation type="journal article" date="1995" name="Hum. Mutat.">
        <title>Mutations in muscle phosphofructokinase gene.</title>
        <authorList>
            <person name="Raben N."/>
            <person name="Sherman J.B."/>
        </authorList>
    </citation>
    <scope>REVIEW ON GSD7 VARIANTS</scope>
</reference>
<reference key="10">
    <citation type="journal article" date="2010" name="Sci. Signal.">
        <title>Quantitative phosphoproteomics reveals widespread full phosphorylation site occupancy during mitosis.</title>
        <authorList>
            <person name="Olsen J.V."/>
            <person name="Vermeulen M."/>
            <person name="Santamaria A."/>
            <person name="Kumar C."/>
            <person name="Miller M.L."/>
            <person name="Jensen L.J."/>
            <person name="Gnad F."/>
            <person name="Cox J."/>
            <person name="Jensen T.S."/>
            <person name="Nigg E.A."/>
            <person name="Brunak S."/>
            <person name="Mann M."/>
        </authorList>
    </citation>
    <scope>PHOSPHORYLATION [LARGE SCALE ANALYSIS] AT SER-667</scope>
    <scope>IDENTIFICATION BY MASS SPECTROMETRY [LARGE SCALE ANALYSIS]</scope>
    <source>
        <tissue>Cervix carcinoma</tissue>
    </source>
</reference>
<reference key="11">
    <citation type="journal article" date="2011" name="BMC Syst. Biol.">
        <title>Initial characterization of the human central proteome.</title>
        <authorList>
            <person name="Burkard T.R."/>
            <person name="Planyavsky M."/>
            <person name="Kaupe I."/>
            <person name="Breitwieser F.P."/>
            <person name="Buerckstuemmer T."/>
            <person name="Bennett K.L."/>
            <person name="Superti-Furga G."/>
            <person name="Colinge J."/>
        </authorList>
    </citation>
    <scope>IDENTIFICATION BY MASS SPECTROMETRY [LARGE SCALE ANALYSIS]</scope>
</reference>
<reference key="12">
    <citation type="journal article" date="2013" name="J. Proteome Res.">
        <title>Toward a comprehensive characterization of a human cancer cell phosphoproteome.</title>
        <authorList>
            <person name="Zhou H."/>
            <person name="Di Palma S."/>
            <person name="Preisinger C."/>
            <person name="Peng M."/>
            <person name="Polat A.N."/>
            <person name="Heck A.J."/>
            <person name="Mohammed S."/>
        </authorList>
    </citation>
    <scope>PHOSPHORYLATION [LARGE SCALE ANALYSIS] AT SER-667</scope>
    <scope>IDENTIFICATION BY MASS SPECTROMETRY [LARGE SCALE ANALYSIS]</scope>
    <source>
        <tissue>Cervix carcinoma</tissue>
        <tissue>Erythroleukemia</tissue>
    </source>
</reference>
<reference key="13">
    <citation type="journal article" date="2018" name="Mol. Cell">
        <title>p300-mediated lysine 2-hydroxyisobutyrylation regulates glycolysis.</title>
        <authorList>
            <person name="Huang H."/>
            <person name="Tang S."/>
            <person name="Ji M."/>
            <person name="Tang Z."/>
            <person name="Shimada M."/>
            <person name="Liu X."/>
            <person name="Qi S."/>
            <person name="Locasale J.W."/>
            <person name="Roeder R.G."/>
            <person name="Zhao Y."/>
            <person name="Li X."/>
        </authorList>
    </citation>
    <scope>HYDROXYBUTYRYLATION AT LYS-557</scope>
</reference>
<reference key="14">
    <citation type="journal article" date="1994" name="Am. J. Hum. Genet.">
        <title>Identification of three novel mutations in non-Ashkenazi Italian patients with muscle phosphofructokinase deficiency.</title>
        <authorList>
            <person name="Tsujino S."/>
            <person name="Servidei S."/>
            <person name="Tonin P."/>
            <person name="Shanske S."/>
            <person name="Azan G."/>
            <person name="DiMauro S."/>
        </authorList>
    </citation>
    <scope>VARIANTS GSD7 PRO-39 AND ALA-543</scope>
</reference>
<reference key="15">
    <citation type="journal article" date="1994" name="Am. J. Hum. Genet.">
        <title>Common mutations in the phosphofructokinase-M gene in Ashkenazi Jewish patients with glycogenesis VII--and their population frequency.</title>
        <authorList>
            <person name="Sherman J.B."/>
            <person name="Raben N."/>
            <person name="Nicastri C."/>
            <person name="Argov Z."/>
            <person name="Nakajima H."/>
            <person name="Adams E.M."/>
            <person name="Eng C.M."/>
            <person name="Cowan T.M."/>
            <person name="Plotz P.H."/>
        </authorList>
    </citation>
    <scope>VARIANT GSD7 LEU-39</scope>
</reference>
<reference key="16">
    <citation type="journal article" date="1995" name="Am. J. Hum. Genet.">
        <title>Functional expression of human mutant phosphofructokinase in yeast: genetic defects in French Canadian and Swiss patients with phosphofructokinase deficiency.</title>
        <authorList>
            <person name="Raben N."/>
            <person name="Exelbert R."/>
            <person name="Spiegel R."/>
            <person name="Sherman J.B."/>
            <person name="Plotz P."/>
            <person name="Heinisch J.J."/>
        </authorList>
    </citation>
    <scope>VARIANT GSD7 ASP-209</scope>
    <scope>VARIANTS GLN-100 AND HIS-696</scope>
    <scope>CHARACTERIZATION OF VARIANT GSD7 ASP-209</scope>
</reference>
<reference key="17">
    <citation type="journal article" date="1996" name="Hum. Mutat.">
        <title>Novel missense mutation (W686C) of the phosphofructokinase-M gene in a Japanese patient with a mild form of glycogenosis VII.</title>
        <authorList>
            <person name="Hamaguchi T."/>
            <person name="Nakajima H."/>
            <person name="Noguchi T."/>
            <person name="Nakagawa C."/>
            <person name="Kuwajima M."/>
            <person name="Kono N."/>
            <person name="Tarui S."/>
            <person name="Matsuzawa Y."/>
        </authorList>
    </citation>
    <scope>VARIANT GSD7 CYS-686</scope>
</reference>
<reference key="18">
    <citation type="journal article" date="2012" name="Neuromuscul. Disord.">
        <title>Clinical features and new molecular findings in muscle phosphofructokinase deficiency (GSD type VII).</title>
        <authorList>
            <person name="Musumeci O."/>
            <person name="Bruno C."/>
            <person name="Mongini T."/>
            <person name="Rodolico C."/>
            <person name="Aguennouz M."/>
            <person name="Barca E."/>
            <person name="Amati A."/>
            <person name="Cassandrini D."/>
            <person name="Serlenga L."/>
            <person name="Vita G."/>
            <person name="Toscano A."/>
        </authorList>
    </citation>
    <scope>VARIANTS GSD7 VAL-57; CYS-180 AND ALA-591</scope>
</reference>
<reference key="19">
    <citation type="journal article" date="2013" name="Front. Physiol.">
        <title>First description of phosphofructokinase deficiency in spain: identification of a novel homozygous missense mutation in the PFKM gene.</title>
        <authorList>
            <person name="Vives-Corrons J.L."/>
            <person name="Koralkova P."/>
            <person name="Grau J.M."/>
            <person name="Manu Pereira Mdel M."/>
            <person name="Van Wijk R."/>
        </authorList>
    </citation>
    <scope>VARIANT GSD7 GLY-309</scope>
    <scope>CHARACTERIZATION OF VARIANT GSD7 GLY-309</scope>
</reference>
<name>PFKAM_HUMAN</name>
<comment type="function">
    <text>Catalyzes the phosphorylation of D-fructose 6-phosphate to fructose 1,6-bisphosphate by ATP, the first committing step of glycolysis.</text>
</comment>
<comment type="catalytic activity">
    <reaction evidence="5">
        <text>beta-D-fructose 6-phosphate + ATP = beta-D-fructose 1,6-bisphosphate + ADP + H(+)</text>
        <dbReference type="Rhea" id="RHEA:16109"/>
        <dbReference type="ChEBI" id="CHEBI:15378"/>
        <dbReference type="ChEBI" id="CHEBI:30616"/>
        <dbReference type="ChEBI" id="CHEBI:32966"/>
        <dbReference type="ChEBI" id="CHEBI:57634"/>
        <dbReference type="ChEBI" id="CHEBI:456216"/>
        <dbReference type="EC" id="2.7.1.11"/>
    </reaction>
</comment>
<comment type="cofactor">
    <cofactor>
        <name>Mg(2+)</name>
        <dbReference type="ChEBI" id="CHEBI:18420"/>
    </cofactor>
</comment>
<comment type="activity regulation">
    <text>Allosterically activated by ADP, AMP, or fructose 2,6-bisphosphate, and allosterically inhibited by ATP or citrate.</text>
</comment>
<comment type="pathway">
    <text evidence="5">Carbohydrate degradation; glycolysis; D-glyceraldehyde 3-phosphate and glycerone phosphate from D-glucose: step 3/4.</text>
</comment>
<comment type="subunit">
    <text evidence="3 5 15">Homo- and heterotetramers (By similarity). Phosphofructokinase (PFK) enzyme functions as a tetramer composed of different combinations of 3 types of subunits, called PFKM (where M stands for Muscle), PFKL (Liver) and PFKP (Platelet). The composition of the PFK tetramer differs according to the tissue type it is present in. In muscles, it is composed of 4 PFKM subunits (also called M4). In the liver, the predominant form is a tetramer of PFKL subunits (L4). In erythrocytes, both PFKM and PFKL subunits randomly tetramerize to form M4, L4 and other combinations (ML3, M2L2, M3L). The kinetic and regulatory properties of the tetrameric enzyme are dependent on the subunit composition, hence can vary across tissues (Probable). Interacts (via C-terminus) with HK1 (via N-terminal spermatogenic cell-specific region) (By similarity).</text>
</comment>
<comment type="interaction">
    <interactant intactId="EBI-514788">
        <id>P08237</id>
    </interactant>
    <interactant intactId="EBI-487243">
        <id>P17858</id>
        <label>PFKL</label>
    </interactant>
    <organismsDiffer>false</organismsDiffer>
    <experiments>6</experiments>
</comment>
<comment type="interaction">
    <interactant intactId="EBI-514788">
        <id>P08237</id>
    </interactant>
    <interactant intactId="EBI-514788">
        <id>P08237</id>
        <label>PFKM</label>
    </interactant>
    <organismsDiffer>false</organismsDiffer>
    <experiments>3</experiments>
</comment>
<comment type="interaction">
    <interactant intactId="EBI-514788">
        <id>P08237</id>
    </interactant>
    <interactant intactId="EBI-359022">
        <id>Q01813</id>
        <label>PFKP</label>
    </interactant>
    <organismsDiffer>false</organismsDiffer>
    <experiments>2</experiments>
</comment>
<comment type="interaction">
    <interactant intactId="EBI-514788">
        <id>P08237</id>
    </interactant>
    <interactant intactId="EBI-747107">
        <id>Q8IUQ4</id>
        <label>SIAH1</label>
    </interactant>
    <organismsDiffer>false</organismsDiffer>
    <experiments>3</experiments>
</comment>
<comment type="subcellular location">
    <subcellularLocation>
        <location evidence="5">Cytoplasm</location>
    </subcellularLocation>
</comment>
<comment type="alternative products">
    <event type="alternative splicing"/>
    <isoform>
        <id>P08237-1</id>
        <name>1</name>
        <sequence type="displayed"/>
    </isoform>
    <isoform>
        <id>P08237-2</id>
        <name>2</name>
        <sequence type="described" ref="VSP_004667"/>
    </isoform>
    <isoform>
        <id>P08237-3</id>
        <name>3</name>
        <sequence type="described" ref="VSP_046125"/>
    </isoform>
</comment>
<comment type="PTM">
    <text evidence="1">GlcNAcylation decreases enzyme activity.</text>
</comment>
<comment type="disease" evidence="6 7 9 10 11 12">
    <disease id="DI-00527">
        <name>Glycogen storage disease 7</name>
        <acronym>GSD7</acronym>
        <description>A metabolic disorder characterized by exercise intolerance with associated nausea and vomiting, muscle cramping, exertional myopathy and compensated hemolysis. Short bursts of intense activity are particularly difficult. Severe muscle cramps and myoglobinuria develop after vigorous exercise.</description>
        <dbReference type="MIM" id="232800"/>
    </disease>
    <text>The disease is caused by variants affecting the gene represented in this entry.</text>
</comment>
<comment type="miscellaneous">
    <text>In human PFK exists as a system of 3 types of subunits, PFKM (muscle), PFKL (liver) and PFKP (platelet) isoenzymes.</text>
</comment>
<comment type="similarity">
    <text evidence="5">Belongs to the phosphofructokinase type A (PFKA) family. ATP-dependent PFK group I subfamily. Eukaryotic two domain clade 'E' sub-subfamily.</text>
</comment>
<protein>
    <recommendedName>
        <fullName evidence="5">ATP-dependent 6-phosphofructokinase, muscle type</fullName>
        <shortName evidence="5">ATP-PFK</shortName>
        <shortName>PFK-M</shortName>
        <ecNumber evidence="5">2.7.1.11</ecNumber>
    </recommendedName>
    <alternativeName>
        <fullName>6-phosphofructokinase type A</fullName>
    </alternativeName>
    <alternativeName>
        <fullName>Phosphofructo-1-kinase isozyme A</fullName>
        <shortName>PFK-A</shortName>
    </alternativeName>
    <alternativeName>
        <fullName evidence="5">Phosphohexokinase</fullName>
    </alternativeName>
</protein>
<gene>
    <name type="primary">PFKM</name>
    <name type="synonym">PFKX</name>
</gene>
<accession>P08237</accession>
<accession>J3KNX3</accession>
<accession>Q16814</accession>
<accession>Q16815</accession>
<accession>Q6ZTT1</accession>
<evidence type="ECO:0000250" key="1"/>
<evidence type="ECO:0000250" key="2">
    <source>
        <dbReference type="UniProtKB" id="P00511"/>
    </source>
</evidence>
<evidence type="ECO:0000250" key="3">
    <source>
        <dbReference type="UniProtKB" id="P47857"/>
    </source>
</evidence>
<evidence type="ECO:0000250" key="4">
    <source>
        <dbReference type="UniProtKB" id="P47858"/>
    </source>
</evidence>
<evidence type="ECO:0000255" key="5">
    <source>
        <dbReference type="HAMAP-Rule" id="MF_03184"/>
    </source>
</evidence>
<evidence type="ECO:0000269" key="6">
    <source>
    </source>
</evidence>
<evidence type="ECO:0000269" key="7">
    <source>
    </source>
</evidence>
<evidence type="ECO:0000269" key="8">
    <source>
    </source>
</evidence>
<evidence type="ECO:0000269" key="9">
    <source>
    </source>
</evidence>
<evidence type="ECO:0000269" key="10">
    <source>
    </source>
</evidence>
<evidence type="ECO:0000269" key="11">
    <source>
    </source>
</evidence>
<evidence type="ECO:0000269" key="12">
    <source>
    </source>
</evidence>
<evidence type="ECO:0000303" key="13">
    <source>
    </source>
</evidence>
<evidence type="ECO:0000303" key="14">
    <source>
    </source>
</evidence>
<evidence type="ECO:0000305" key="15"/>
<evidence type="ECO:0007744" key="16">
    <source>
    </source>
</evidence>
<evidence type="ECO:0007744" key="17">
    <source>
    </source>
</evidence>